<evidence type="ECO:0000250" key="1"/>
<evidence type="ECO:0000255" key="2"/>
<evidence type="ECO:0000255" key="3">
    <source>
        <dbReference type="PROSITE-ProRule" id="PRU10039"/>
    </source>
</evidence>
<evidence type="ECO:0000255" key="4">
    <source>
        <dbReference type="PROSITE-ProRule" id="PRU10138"/>
    </source>
</evidence>
<evidence type="ECO:0000269" key="5">
    <source>
    </source>
</evidence>
<evidence type="ECO:0000305" key="6"/>
<organism>
    <name type="scientific">Rattus norvegicus</name>
    <name type="common">Rat</name>
    <dbReference type="NCBI Taxonomy" id="10116"/>
    <lineage>
        <taxon>Eukaryota</taxon>
        <taxon>Metazoa</taxon>
        <taxon>Chordata</taxon>
        <taxon>Craniata</taxon>
        <taxon>Vertebrata</taxon>
        <taxon>Euteleostomi</taxon>
        <taxon>Mammalia</taxon>
        <taxon>Eutheria</taxon>
        <taxon>Euarchontoglires</taxon>
        <taxon>Glires</taxon>
        <taxon>Rodentia</taxon>
        <taxon>Myomorpha</taxon>
        <taxon>Muroidea</taxon>
        <taxon>Muridae</taxon>
        <taxon>Murinae</taxon>
        <taxon>Rattus</taxon>
    </lineage>
</organism>
<keyword id="KW-0903">Direct protein sequencing</keyword>
<keyword id="KW-1015">Disulfide bond</keyword>
<keyword id="KW-0256">Endoplasmic reticulum</keyword>
<keyword id="KW-0325">Glycoprotein</keyword>
<keyword id="KW-0378">Hydrolase</keyword>
<keyword id="KW-1185">Reference proteome</keyword>
<keyword id="KW-0719">Serine esterase</keyword>
<keyword id="KW-0732">Signal</keyword>
<reference key="1">
    <citation type="journal article" date="1994" name="J. Biol. Chem.">
        <title>Rat kidney carboxylesterase. Cloning, sequencing, cellular localization, and relationship to rat liver hydrolase.</title>
        <authorList>
            <person name="Yan B."/>
            <person name="Yang D."/>
            <person name="Brady M."/>
            <person name="Parkinson A."/>
        </authorList>
    </citation>
    <scope>NUCLEOTIDE SEQUENCE [MRNA]</scope>
    <source>
        <strain>Sprague-Dawley</strain>
        <tissue>Liver</tissue>
    </source>
</reference>
<reference key="2">
    <citation type="journal article" date="2004" name="Genome Res.">
        <title>The status, quality, and expansion of the NIH full-length cDNA project: the Mammalian Gene Collection (MGC).</title>
        <authorList>
            <consortium name="The MGC Project Team"/>
        </authorList>
    </citation>
    <scope>NUCLEOTIDE SEQUENCE [LARGE SCALE MRNA]</scope>
    <source>
        <strain>Brown Norway</strain>
        <tissue>Kidney</tissue>
    </source>
</reference>
<reference key="3">
    <citation type="journal article" date="1995" name="Toxicol. Lett.">
        <title>Molecular aspects of carboxylesterase isoforms in comparison with other esterases.</title>
        <authorList>
            <person name="Satoh T."/>
            <person name="Hosokawa M."/>
        </authorList>
    </citation>
    <scope>PROTEIN SEQUENCE OF 19-40</scope>
    <scope>NUCLEOTIDE SEQUENCE [MRNA] OF 113-121; 138-149; 216-224; 350-356 AND 464-469</scope>
    <scope>SUBUNIT</scope>
    <source>
        <tissue>Liver</tissue>
    </source>
</reference>
<name>EST5_RAT</name>
<protein>
    <recommendedName>
        <fullName>Liver carboxylesterase B-1</fullName>
        <ecNumber>3.1.1.1</ecNumber>
    </recommendedName>
    <alternativeName>
        <fullName>Liver microsomal carboxylesterase</fullName>
    </alternativeName>
</protein>
<proteinExistence type="evidence at protein level"/>
<dbReference type="EC" id="3.1.1.1"/>
<dbReference type="EMBL" id="U10698">
    <property type="protein sequence ID" value="AAA64639.1"/>
    <property type="molecule type" value="mRNA"/>
</dbReference>
<dbReference type="EMBL" id="BC079129">
    <property type="protein sequence ID" value="AAH79129.1"/>
    <property type="molecule type" value="mRNA"/>
</dbReference>
<dbReference type="PIR" id="S71597">
    <property type="entry name" value="S71597"/>
</dbReference>
<dbReference type="RefSeq" id="NP_001019536.1">
    <property type="nucleotide sequence ID" value="NM_001024365.1"/>
</dbReference>
<dbReference type="SMR" id="Q63010"/>
<dbReference type="ELM" id="Q63010"/>
<dbReference type="FunCoup" id="Q63010">
    <property type="interactions" value="22"/>
</dbReference>
<dbReference type="BindingDB" id="Q63010"/>
<dbReference type="ChEMBL" id="CHEMBL2366498"/>
<dbReference type="ESTHER" id="ratno-lmcxe">
    <property type="family name" value="Carb_B_Chordata"/>
</dbReference>
<dbReference type="MEROPS" id="S09.969"/>
<dbReference type="GlyGen" id="Q63010">
    <property type="glycosylation" value="1 site"/>
</dbReference>
<dbReference type="PaxDb" id="10116-ENSRNOP00000024187"/>
<dbReference type="GeneID" id="501232"/>
<dbReference type="KEGG" id="rno:501232"/>
<dbReference type="AGR" id="RGD:1565666"/>
<dbReference type="CTD" id="501232"/>
<dbReference type="eggNOG" id="KOG1516">
    <property type="taxonomic scope" value="Eukaryota"/>
</dbReference>
<dbReference type="InParanoid" id="Q63010"/>
<dbReference type="PhylomeDB" id="Q63010"/>
<dbReference type="PRO" id="PR:Q63010"/>
<dbReference type="Proteomes" id="UP000002494">
    <property type="component" value="Unplaced"/>
</dbReference>
<dbReference type="GO" id="GO:0005783">
    <property type="term" value="C:endoplasmic reticulum"/>
    <property type="evidence" value="ECO:0000318"/>
    <property type="project" value="GO_Central"/>
</dbReference>
<dbReference type="GO" id="GO:0005788">
    <property type="term" value="C:endoplasmic reticulum lumen"/>
    <property type="evidence" value="ECO:0007669"/>
    <property type="project" value="UniProtKB-SubCell"/>
</dbReference>
<dbReference type="GO" id="GO:0005811">
    <property type="term" value="C:lipid droplet"/>
    <property type="evidence" value="ECO:0000318"/>
    <property type="project" value="GO_Central"/>
</dbReference>
<dbReference type="GO" id="GO:0106435">
    <property type="term" value="F:carboxylesterase activity"/>
    <property type="evidence" value="ECO:0007669"/>
    <property type="project" value="UniProtKB-EC"/>
</dbReference>
<dbReference type="GO" id="GO:0052689">
    <property type="term" value="F:carboxylic ester hydrolase activity"/>
    <property type="evidence" value="ECO:0000318"/>
    <property type="project" value="GO_Central"/>
</dbReference>
<dbReference type="GO" id="GO:0016042">
    <property type="term" value="P:lipid catabolic process"/>
    <property type="evidence" value="ECO:0000318"/>
    <property type="project" value="GO_Central"/>
</dbReference>
<dbReference type="CDD" id="cd00312">
    <property type="entry name" value="Esterase_lipase"/>
    <property type="match status" value="1"/>
</dbReference>
<dbReference type="FunFam" id="3.40.50.1820:FF:000011">
    <property type="entry name" value="Carboxylic ester hydrolase"/>
    <property type="match status" value="1"/>
</dbReference>
<dbReference type="Gene3D" id="3.40.50.1820">
    <property type="entry name" value="alpha/beta hydrolase"/>
    <property type="match status" value="1"/>
</dbReference>
<dbReference type="InterPro" id="IPR029058">
    <property type="entry name" value="AB_hydrolase_fold"/>
</dbReference>
<dbReference type="InterPro" id="IPR002018">
    <property type="entry name" value="CarbesteraseB"/>
</dbReference>
<dbReference type="InterPro" id="IPR019826">
    <property type="entry name" value="Carboxylesterase_B_AS"/>
</dbReference>
<dbReference type="InterPro" id="IPR019819">
    <property type="entry name" value="Carboxylesterase_B_CS"/>
</dbReference>
<dbReference type="InterPro" id="IPR050309">
    <property type="entry name" value="Type-B_Carboxylest/Lipase"/>
</dbReference>
<dbReference type="PANTHER" id="PTHR11559">
    <property type="entry name" value="CARBOXYLESTERASE"/>
    <property type="match status" value="1"/>
</dbReference>
<dbReference type="Pfam" id="PF00135">
    <property type="entry name" value="COesterase"/>
    <property type="match status" value="1"/>
</dbReference>
<dbReference type="SUPFAM" id="SSF53474">
    <property type="entry name" value="alpha/beta-Hydrolases"/>
    <property type="match status" value="1"/>
</dbReference>
<dbReference type="PROSITE" id="PS00122">
    <property type="entry name" value="CARBOXYLESTERASE_B_1"/>
    <property type="match status" value="1"/>
</dbReference>
<dbReference type="PROSITE" id="PS00941">
    <property type="entry name" value="CARBOXYLESTERASE_B_2"/>
    <property type="match status" value="1"/>
</dbReference>
<dbReference type="PROSITE" id="PS00014">
    <property type="entry name" value="ER_TARGET"/>
    <property type="match status" value="1"/>
</dbReference>
<sequence>MCLRSLFLVSLATCVVCGNPSSPPVVDTMKGKVLGKYASLEGVTQSVAVFLGVPFAKPPLGSLRFAPPQPAEPWSFVKNTTTYPPMCSQDATKGQRMNDLLTNRKEKVHLQFSEDCLYLNIYTPADFTKDSRMPVMVWIHGGGLTQGGASTYDGQVLSAYENVVVVAIQYRLGIWGFFSTGDEHSRGNWGHLDQVAALHWVQDNIANFGGDPGSVTIFGESAGGFSVSVLVLSPLSKNLYHRAISESGVVLITELFTKDVRPAAKQIADMAGCKTTTSAIIVHCLRQKTEEELLEIMEKMNLIKLSSQRDTKESYHFLSTVIDDVVLPKDPKEILAEKNFNTVPYIVGINKQECGWLLPTMMRFVPPDVKLDKKMAIMLLEKFASIYGIPEDIIPVAIEKYRKGSDDPIKIRDGILAFIGDVLFCIPSVMVSRDHRDAGAPTYVYEYQYYPSFSSPQRPKDVVGDHADDVYSVFGAPILRDGASEEEIKLSKMVMKFWANFARNGNPNARGLPHWPQYDQKEEYLQIGATTQQSQRLKAEEVAFWTQLLAKRQPQPHHNEL</sequence>
<comment type="function">
    <text>Involved in the detoxification of xenobiotics and in the activation of ester and amide prodrugs.</text>
</comment>
<comment type="catalytic activity">
    <reaction evidence="3">
        <text>a carboxylic ester + H2O = an alcohol + a carboxylate + H(+)</text>
        <dbReference type="Rhea" id="RHEA:21164"/>
        <dbReference type="ChEBI" id="CHEBI:15377"/>
        <dbReference type="ChEBI" id="CHEBI:15378"/>
        <dbReference type="ChEBI" id="CHEBI:29067"/>
        <dbReference type="ChEBI" id="CHEBI:30879"/>
        <dbReference type="ChEBI" id="CHEBI:33308"/>
        <dbReference type="EC" id="3.1.1.1"/>
    </reaction>
</comment>
<comment type="subunit">
    <text evidence="5">Monomer.</text>
</comment>
<comment type="subcellular location">
    <subcellularLocation>
        <location>Endoplasmic reticulum lumen</location>
    </subcellularLocation>
    <text>Microsomal membrane, lumen of endoplasmic reticulum.</text>
</comment>
<comment type="similarity">
    <text evidence="6">Belongs to the type-B carboxylesterase/lipase family.</text>
</comment>
<feature type="signal peptide" evidence="5">
    <location>
        <begin position="1"/>
        <end position="18"/>
    </location>
</feature>
<feature type="chain" id="PRO_0000008582" description="Liver carboxylesterase B-1">
    <location>
        <begin position="19"/>
        <end position="561"/>
    </location>
</feature>
<feature type="short sequence motif" description="Prevents secretion from ER" evidence="4">
    <location>
        <begin position="558"/>
        <end position="561"/>
    </location>
</feature>
<feature type="active site" description="Acyl-ester intermediate" evidence="3">
    <location>
        <position position="221"/>
    </location>
</feature>
<feature type="active site" description="Charge relay system" evidence="1">
    <location>
        <position position="353"/>
    </location>
</feature>
<feature type="active site" description="Charge relay system" evidence="1">
    <location>
        <position position="466"/>
    </location>
</feature>
<feature type="glycosylation site" description="N-linked (GlcNAc...) asparagine" evidence="2">
    <location>
        <position position="79"/>
    </location>
</feature>
<feature type="disulfide bond" evidence="1">
    <location>
        <begin position="87"/>
        <end position="116"/>
    </location>
</feature>
<feature type="disulfide bond" evidence="1">
    <location>
        <begin position="273"/>
        <end position="284"/>
    </location>
</feature>
<feature type="sequence conflict" description="In Ref. 3; AA sequence." evidence="6" ref="3">
    <original>N</original>
    <variation>D</variation>
    <location>
        <position position="19"/>
    </location>
</feature>
<feature type="sequence conflict" description="In Ref. 3; AA sequence." evidence="6" ref="3">
    <original>M</original>
    <variation>V</variation>
    <location>
        <position position="29"/>
    </location>
</feature>
<feature type="sequence conflict" description="In Ref. 3; AA sequence." evidence="6" ref="3">
    <original>A</original>
    <variation>V</variation>
    <location>
        <position position="38"/>
    </location>
</feature>
<feature type="sequence conflict" description="In Ref. 2; AAH79129." evidence="6" ref="2">
    <original>V</original>
    <variation>A</variation>
    <location>
        <position position="422"/>
    </location>
</feature>
<feature type="sequence conflict" description="In Ref. 2; AAH79129." evidence="6" ref="2">
    <original>A</original>
    <variation>G</variation>
    <location>
        <position position="509"/>
    </location>
</feature>
<feature type="sequence conflict" description="In Ref. 2; AAH79129." evidence="6" ref="2">
    <original>R</original>
    <variation>G</variation>
    <location>
        <position position="536"/>
    </location>
</feature>
<accession>Q63010</accession>
<accession>Q6AYA3</accession>
<accession>Q9QUX6</accession>